<sequence length="513" mass="55311">MSAKKPLALVILDGWGYREDNSDNAIANANTPVMDSLIANEANTLISASGFDVGLPDGQMGNSEVGHTNIGAGRVVYQDLTRITKSIADGDFFENEALTTAMDKAINAGKAVHIMGLMSPGGVHSHEDHIAAAIEMAAKRGAEKIYLHCFLDGRDTPPRSAQNSLERFDALFAELGKGRTASLVGRYYAMDRDNNWDRVEVAYNLLSAAKADFTVDSAVAGLTDAYSRDENDEFVKATEIRAEGQESAAMVDGDTVIFMNYRADRAREITRAFEADFTSFVRTQTPALAEFVMLTRYAANIKLPAAFPPATLKNTLGEWLSKKGKKQLRISETEKYAHVTFFFNGGVEDEFDGETRSLVASPKVATYDLQPEMSAPELTEKLVAAIKGGEFDTIICNYPNGDMVGHTGVYDAAVKACEALDGCIGQVVEAIKSVGGQLLITADHGNAEMMINPETGGVHTAHTNLPVPLIYVGDKSLTLKDGGKLSDLAPTMLSLSDIEIPAEMTGQVLFDLK</sequence>
<name>GPMI_PHOPR</name>
<reference key="1">
    <citation type="journal article" date="2005" name="Science">
        <title>Life at depth: Photobacterium profundum genome sequence and expression analysis.</title>
        <authorList>
            <person name="Vezzi A."/>
            <person name="Campanaro S."/>
            <person name="D'Angelo M."/>
            <person name="Simonato F."/>
            <person name="Vitulo N."/>
            <person name="Lauro F.M."/>
            <person name="Cestaro A."/>
            <person name="Malacrida G."/>
            <person name="Simionati B."/>
            <person name="Cannata N."/>
            <person name="Romualdi C."/>
            <person name="Bartlett D.H."/>
            <person name="Valle G."/>
        </authorList>
    </citation>
    <scope>NUCLEOTIDE SEQUENCE [LARGE SCALE GENOMIC DNA]</scope>
    <source>
        <strain>ATCC BAA-1253 / SS9</strain>
    </source>
</reference>
<feature type="chain" id="PRO_0000212182" description="2,3-bisphosphoglycerate-independent phosphoglycerate mutase">
    <location>
        <begin position="1"/>
        <end position="513"/>
    </location>
</feature>
<feature type="active site" description="Phosphoserine intermediate" evidence="1">
    <location>
        <position position="63"/>
    </location>
</feature>
<feature type="binding site" evidence="1">
    <location>
        <position position="13"/>
    </location>
    <ligand>
        <name>Mn(2+)</name>
        <dbReference type="ChEBI" id="CHEBI:29035"/>
        <label>2</label>
    </ligand>
</feature>
<feature type="binding site" evidence="1">
    <location>
        <position position="63"/>
    </location>
    <ligand>
        <name>Mn(2+)</name>
        <dbReference type="ChEBI" id="CHEBI:29035"/>
        <label>2</label>
    </ligand>
</feature>
<feature type="binding site" evidence="1">
    <location>
        <position position="124"/>
    </location>
    <ligand>
        <name>substrate</name>
    </ligand>
</feature>
<feature type="binding site" evidence="1">
    <location>
        <begin position="154"/>
        <end position="155"/>
    </location>
    <ligand>
        <name>substrate</name>
    </ligand>
</feature>
<feature type="binding site" evidence="1">
    <location>
        <position position="186"/>
    </location>
    <ligand>
        <name>substrate</name>
    </ligand>
</feature>
<feature type="binding site" evidence="1">
    <location>
        <position position="192"/>
    </location>
    <ligand>
        <name>substrate</name>
    </ligand>
</feature>
<feature type="binding site" evidence="1">
    <location>
        <begin position="262"/>
        <end position="265"/>
    </location>
    <ligand>
        <name>substrate</name>
    </ligand>
</feature>
<feature type="binding site" evidence="1">
    <location>
        <position position="335"/>
    </location>
    <ligand>
        <name>substrate</name>
    </ligand>
</feature>
<feature type="binding site" evidence="1">
    <location>
        <position position="402"/>
    </location>
    <ligand>
        <name>Mn(2+)</name>
        <dbReference type="ChEBI" id="CHEBI:29035"/>
        <label>1</label>
    </ligand>
</feature>
<feature type="binding site" evidence="1">
    <location>
        <position position="406"/>
    </location>
    <ligand>
        <name>Mn(2+)</name>
        <dbReference type="ChEBI" id="CHEBI:29035"/>
        <label>1</label>
    </ligand>
</feature>
<feature type="binding site" evidence="1">
    <location>
        <position position="443"/>
    </location>
    <ligand>
        <name>Mn(2+)</name>
        <dbReference type="ChEBI" id="CHEBI:29035"/>
        <label>2</label>
    </ligand>
</feature>
<feature type="binding site" evidence="1">
    <location>
        <position position="444"/>
    </location>
    <ligand>
        <name>Mn(2+)</name>
        <dbReference type="ChEBI" id="CHEBI:29035"/>
        <label>2</label>
    </ligand>
</feature>
<feature type="binding site" evidence="1">
    <location>
        <position position="462"/>
    </location>
    <ligand>
        <name>Mn(2+)</name>
        <dbReference type="ChEBI" id="CHEBI:29035"/>
        <label>1</label>
    </ligand>
</feature>
<comment type="function">
    <text evidence="1">Catalyzes the interconversion of 2-phosphoglycerate and 3-phosphoglycerate.</text>
</comment>
<comment type="catalytic activity">
    <reaction evidence="1">
        <text>(2R)-2-phosphoglycerate = (2R)-3-phosphoglycerate</text>
        <dbReference type="Rhea" id="RHEA:15901"/>
        <dbReference type="ChEBI" id="CHEBI:58272"/>
        <dbReference type="ChEBI" id="CHEBI:58289"/>
        <dbReference type="EC" id="5.4.2.12"/>
    </reaction>
</comment>
<comment type="cofactor">
    <cofactor evidence="1">
        <name>Mn(2+)</name>
        <dbReference type="ChEBI" id="CHEBI:29035"/>
    </cofactor>
    <text evidence="1">Binds 2 manganese ions per subunit.</text>
</comment>
<comment type="pathway">
    <text evidence="1">Carbohydrate degradation; glycolysis; pyruvate from D-glyceraldehyde 3-phosphate: step 3/5.</text>
</comment>
<comment type="subunit">
    <text evidence="1">Monomer.</text>
</comment>
<comment type="similarity">
    <text evidence="1">Belongs to the BPG-independent phosphoglycerate mutase family.</text>
</comment>
<comment type="sequence caution" evidence="2">
    <conflict type="erroneous initiation">
        <sequence resource="EMBL-CDS" id="CAG18663"/>
    </conflict>
    <text>Extended N-terminus.</text>
</comment>
<keyword id="KW-0324">Glycolysis</keyword>
<keyword id="KW-0413">Isomerase</keyword>
<keyword id="KW-0464">Manganese</keyword>
<keyword id="KW-0479">Metal-binding</keyword>
<keyword id="KW-1185">Reference proteome</keyword>
<protein>
    <recommendedName>
        <fullName evidence="1">2,3-bisphosphoglycerate-independent phosphoglycerate mutase</fullName>
        <shortName evidence="1">BPG-independent PGAM</shortName>
        <shortName evidence="1">Phosphoglyceromutase</shortName>
        <shortName evidence="1">iPGM</shortName>
        <ecNumber evidence="1">5.4.2.12</ecNumber>
    </recommendedName>
</protein>
<accession>Q6LVL2</accession>
<evidence type="ECO:0000255" key="1">
    <source>
        <dbReference type="HAMAP-Rule" id="MF_01038"/>
    </source>
</evidence>
<evidence type="ECO:0000305" key="2"/>
<gene>
    <name evidence="1" type="primary">gpmI</name>
    <name type="ordered locus">PBPRA0224</name>
</gene>
<dbReference type="EC" id="5.4.2.12" evidence="1"/>
<dbReference type="EMBL" id="CR378663">
    <property type="protein sequence ID" value="CAG18663.1"/>
    <property type="status" value="ALT_INIT"/>
    <property type="molecule type" value="Genomic_DNA"/>
</dbReference>
<dbReference type="RefSeq" id="WP_041393828.1">
    <property type="nucleotide sequence ID" value="NC_006370.1"/>
</dbReference>
<dbReference type="SMR" id="Q6LVL2"/>
<dbReference type="STRING" id="298386.PBPRA0224"/>
<dbReference type="KEGG" id="ppr:PBPRA0224"/>
<dbReference type="eggNOG" id="COG0696">
    <property type="taxonomic scope" value="Bacteria"/>
</dbReference>
<dbReference type="HOGENOM" id="CLU_026099_2_0_6"/>
<dbReference type="UniPathway" id="UPA00109">
    <property type="reaction ID" value="UER00186"/>
</dbReference>
<dbReference type="Proteomes" id="UP000000593">
    <property type="component" value="Chromosome 1"/>
</dbReference>
<dbReference type="GO" id="GO:0005829">
    <property type="term" value="C:cytosol"/>
    <property type="evidence" value="ECO:0007669"/>
    <property type="project" value="TreeGrafter"/>
</dbReference>
<dbReference type="GO" id="GO:0030145">
    <property type="term" value="F:manganese ion binding"/>
    <property type="evidence" value="ECO:0007669"/>
    <property type="project" value="UniProtKB-UniRule"/>
</dbReference>
<dbReference type="GO" id="GO:0004619">
    <property type="term" value="F:phosphoglycerate mutase activity"/>
    <property type="evidence" value="ECO:0007669"/>
    <property type="project" value="UniProtKB-EC"/>
</dbReference>
<dbReference type="GO" id="GO:0006007">
    <property type="term" value="P:glucose catabolic process"/>
    <property type="evidence" value="ECO:0007669"/>
    <property type="project" value="InterPro"/>
</dbReference>
<dbReference type="GO" id="GO:0006096">
    <property type="term" value="P:glycolytic process"/>
    <property type="evidence" value="ECO:0007669"/>
    <property type="project" value="UniProtKB-UniRule"/>
</dbReference>
<dbReference type="CDD" id="cd16010">
    <property type="entry name" value="iPGM"/>
    <property type="match status" value="1"/>
</dbReference>
<dbReference type="FunFam" id="3.40.1450.10:FF:000001">
    <property type="entry name" value="2,3-bisphosphoglycerate-independent phosphoglycerate mutase"/>
    <property type="match status" value="1"/>
</dbReference>
<dbReference type="FunFam" id="3.40.720.10:FF:000001">
    <property type="entry name" value="2,3-bisphosphoglycerate-independent phosphoglycerate mutase"/>
    <property type="match status" value="1"/>
</dbReference>
<dbReference type="Gene3D" id="3.40.720.10">
    <property type="entry name" value="Alkaline Phosphatase, subunit A"/>
    <property type="match status" value="1"/>
</dbReference>
<dbReference type="Gene3D" id="3.40.1450.10">
    <property type="entry name" value="BPG-independent phosphoglycerate mutase, domain B"/>
    <property type="match status" value="1"/>
</dbReference>
<dbReference type="HAMAP" id="MF_01038">
    <property type="entry name" value="GpmI"/>
    <property type="match status" value="1"/>
</dbReference>
<dbReference type="InterPro" id="IPR017850">
    <property type="entry name" value="Alkaline_phosphatase_core_sf"/>
</dbReference>
<dbReference type="InterPro" id="IPR011258">
    <property type="entry name" value="BPG-indep_PGM_N"/>
</dbReference>
<dbReference type="InterPro" id="IPR006124">
    <property type="entry name" value="Metalloenzyme"/>
</dbReference>
<dbReference type="InterPro" id="IPR036646">
    <property type="entry name" value="PGAM_B_sf"/>
</dbReference>
<dbReference type="InterPro" id="IPR005995">
    <property type="entry name" value="Pgm_bpd_ind"/>
</dbReference>
<dbReference type="NCBIfam" id="TIGR01307">
    <property type="entry name" value="pgm_bpd_ind"/>
    <property type="match status" value="1"/>
</dbReference>
<dbReference type="NCBIfam" id="NF003897">
    <property type="entry name" value="PRK05434.1-5"/>
    <property type="match status" value="1"/>
</dbReference>
<dbReference type="PANTHER" id="PTHR31637">
    <property type="entry name" value="2,3-BISPHOSPHOGLYCERATE-INDEPENDENT PHOSPHOGLYCERATE MUTASE"/>
    <property type="match status" value="1"/>
</dbReference>
<dbReference type="PANTHER" id="PTHR31637:SF0">
    <property type="entry name" value="2,3-BISPHOSPHOGLYCERATE-INDEPENDENT PHOSPHOGLYCERATE MUTASE"/>
    <property type="match status" value="1"/>
</dbReference>
<dbReference type="Pfam" id="PF06415">
    <property type="entry name" value="iPGM_N"/>
    <property type="match status" value="1"/>
</dbReference>
<dbReference type="Pfam" id="PF01676">
    <property type="entry name" value="Metalloenzyme"/>
    <property type="match status" value="1"/>
</dbReference>
<dbReference type="PIRSF" id="PIRSF001492">
    <property type="entry name" value="IPGAM"/>
    <property type="match status" value="1"/>
</dbReference>
<dbReference type="SUPFAM" id="SSF64158">
    <property type="entry name" value="2,3-Bisphosphoglycerate-independent phosphoglycerate mutase, substrate-binding domain"/>
    <property type="match status" value="1"/>
</dbReference>
<dbReference type="SUPFAM" id="SSF53649">
    <property type="entry name" value="Alkaline phosphatase-like"/>
    <property type="match status" value="1"/>
</dbReference>
<organism>
    <name type="scientific">Photobacterium profundum (strain SS9)</name>
    <dbReference type="NCBI Taxonomy" id="298386"/>
    <lineage>
        <taxon>Bacteria</taxon>
        <taxon>Pseudomonadati</taxon>
        <taxon>Pseudomonadota</taxon>
        <taxon>Gammaproteobacteria</taxon>
        <taxon>Vibrionales</taxon>
        <taxon>Vibrionaceae</taxon>
        <taxon>Photobacterium</taxon>
    </lineage>
</organism>
<proteinExistence type="inferred from homology"/>